<protein>
    <recommendedName>
        <fullName evidence="1">tRNA-2-methylthio-N(6)-dimethylallyladenosine synthase</fullName>
        <ecNumber evidence="1">2.8.4.3</ecNumber>
    </recommendedName>
    <alternativeName>
        <fullName evidence="1">(Dimethylallyl)adenosine tRNA methylthiotransferase MiaB</fullName>
    </alternativeName>
    <alternativeName>
        <fullName evidence="1">tRNA-i(6)A37 methylthiotransferase</fullName>
    </alternativeName>
</protein>
<gene>
    <name evidence="1" type="primary">miaB</name>
    <name type="ordered locus">Bcenmc03_2721</name>
</gene>
<proteinExistence type="inferred from homology"/>
<organism>
    <name type="scientific">Burkholderia orbicola (strain MC0-3)</name>
    <dbReference type="NCBI Taxonomy" id="406425"/>
    <lineage>
        <taxon>Bacteria</taxon>
        <taxon>Pseudomonadati</taxon>
        <taxon>Pseudomonadota</taxon>
        <taxon>Betaproteobacteria</taxon>
        <taxon>Burkholderiales</taxon>
        <taxon>Burkholderiaceae</taxon>
        <taxon>Burkholderia</taxon>
        <taxon>Burkholderia cepacia complex</taxon>
        <taxon>Burkholderia orbicola</taxon>
    </lineage>
</organism>
<comment type="function">
    <text evidence="1">Catalyzes the methylthiolation of N6-(dimethylallyl)adenosine (i(6)A), leading to the formation of 2-methylthio-N6-(dimethylallyl)adenosine (ms(2)i(6)A) at position 37 in tRNAs that read codons beginning with uridine.</text>
</comment>
<comment type="catalytic activity">
    <reaction evidence="1">
        <text>N(6)-dimethylallyladenosine(37) in tRNA + (sulfur carrier)-SH + AH2 + 2 S-adenosyl-L-methionine = 2-methylsulfanyl-N(6)-dimethylallyladenosine(37) in tRNA + (sulfur carrier)-H + 5'-deoxyadenosine + L-methionine + A + S-adenosyl-L-homocysteine + 2 H(+)</text>
        <dbReference type="Rhea" id="RHEA:37067"/>
        <dbReference type="Rhea" id="RHEA-COMP:10375"/>
        <dbReference type="Rhea" id="RHEA-COMP:10376"/>
        <dbReference type="Rhea" id="RHEA-COMP:14737"/>
        <dbReference type="Rhea" id="RHEA-COMP:14739"/>
        <dbReference type="ChEBI" id="CHEBI:13193"/>
        <dbReference type="ChEBI" id="CHEBI:15378"/>
        <dbReference type="ChEBI" id="CHEBI:17319"/>
        <dbReference type="ChEBI" id="CHEBI:17499"/>
        <dbReference type="ChEBI" id="CHEBI:29917"/>
        <dbReference type="ChEBI" id="CHEBI:57844"/>
        <dbReference type="ChEBI" id="CHEBI:57856"/>
        <dbReference type="ChEBI" id="CHEBI:59789"/>
        <dbReference type="ChEBI" id="CHEBI:64428"/>
        <dbReference type="ChEBI" id="CHEBI:74415"/>
        <dbReference type="ChEBI" id="CHEBI:74417"/>
        <dbReference type="EC" id="2.8.4.3"/>
    </reaction>
</comment>
<comment type="cofactor">
    <cofactor evidence="1">
        <name>[4Fe-4S] cluster</name>
        <dbReference type="ChEBI" id="CHEBI:49883"/>
    </cofactor>
    <text evidence="1">Binds 2 [4Fe-4S] clusters. One cluster is coordinated with 3 cysteines and an exchangeable S-adenosyl-L-methionine.</text>
</comment>
<comment type="subunit">
    <text evidence="1">Monomer.</text>
</comment>
<comment type="subcellular location">
    <subcellularLocation>
        <location evidence="1">Cytoplasm</location>
    </subcellularLocation>
</comment>
<comment type="similarity">
    <text evidence="1">Belongs to the methylthiotransferase family. MiaB subfamily.</text>
</comment>
<dbReference type="EC" id="2.8.4.3" evidence="1"/>
<dbReference type="EMBL" id="CP000958">
    <property type="protein sequence ID" value="ACA91881.1"/>
    <property type="molecule type" value="Genomic_DNA"/>
</dbReference>
<dbReference type="RefSeq" id="WP_006477875.1">
    <property type="nucleotide sequence ID" value="NC_010508.1"/>
</dbReference>
<dbReference type="SMR" id="B1JY57"/>
<dbReference type="GeneID" id="83049506"/>
<dbReference type="KEGG" id="bcm:Bcenmc03_2721"/>
<dbReference type="HOGENOM" id="CLU_018697_2_0_4"/>
<dbReference type="Proteomes" id="UP000002169">
    <property type="component" value="Chromosome 1"/>
</dbReference>
<dbReference type="GO" id="GO:0005829">
    <property type="term" value="C:cytosol"/>
    <property type="evidence" value="ECO:0007669"/>
    <property type="project" value="TreeGrafter"/>
</dbReference>
<dbReference type="GO" id="GO:0051539">
    <property type="term" value="F:4 iron, 4 sulfur cluster binding"/>
    <property type="evidence" value="ECO:0007669"/>
    <property type="project" value="UniProtKB-UniRule"/>
</dbReference>
<dbReference type="GO" id="GO:0046872">
    <property type="term" value="F:metal ion binding"/>
    <property type="evidence" value="ECO:0007669"/>
    <property type="project" value="UniProtKB-KW"/>
</dbReference>
<dbReference type="GO" id="GO:0035597">
    <property type="term" value="F:N6-isopentenyladenosine methylthiotransferase activity"/>
    <property type="evidence" value="ECO:0007669"/>
    <property type="project" value="TreeGrafter"/>
</dbReference>
<dbReference type="CDD" id="cd01335">
    <property type="entry name" value="Radical_SAM"/>
    <property type="match status" value="1"/>
</dbReference>
<dbReference type="FunFam" id="3.40.50.12160:FF:000001">
    <property type="entry name" value="tRNA-2-methylthio-N(6)-dimethylallyladenosine synthase"/>
    <property type="match status" value="1"/>
</dbReference>
<dbReference type="FunFam" id="3.80.30.20:FF:000001">
    <property type="entry name" value="tRNA-2-methylthio-N(6)-dimethylallyladenosine synthase 2"/>
    <property type="match status" value="1"/>
</dbReference>
<dbReference type="Gene3D" id="3.40.50.12160">
    <property type="entry name" value="Methylthiotransferase, N-terminal domain"/>
    <property type="match status" value="1"/>
</dbReference>
<dbReference type="Gene3D" id="3.80.30.20">
    <property type="entry name" value="tm_1862 like domain"/>
    <property type="match status" value="1"/>
</dbReference>
<dbReference type="HAMAP" id="MF_01864">
    <property type="entry name" value="tRNA_metthiotr_MiaB"/>
    <property type="match status" value="1"/>
</dbReference>
<dbReference type="InterPro" id="IPR006638">
    <property type="entry name" value="Elp3/MiaA/NifB-like_rSAM"/>
</dbReference>
<dbReference type="InterPro" id="IPR005839">
    <property type="entry name" value="Methylthiotransferase"/>
</dbReference>
<dbReference type="InterPro" id="IPR020612">
    <property type="entry name" value="Methylthiotransferase_CS"/>
</dbReference>
<dbReference type="InterPro" id="IPR013848">
    <property type="entry name" value="Methylthiotransferase_N"/>
</dbReference>
<dbReference type="InterPro" id="IPR038135">
    <property type="entry name" value="Methylthiotransferase_N_sf"/>
</dbReference>
<dbReference type="InterPro" id="IPR006463">
    <property type="entry name" value="MiaB_methiolase"/>
</dbReference>
<dbReference type="InterPro" id="IPR007197">
    <property type="entry name" value="rSAM"/>
</dbReference>
<dbReference type="InterPro" id="IPR023404">
    <property type="entry name" value="rSAM_horseshoe"/>
</dbReference>
<dbReference type="InterPro" id="IPR002792">
    <property type="entry name" value="TRAM_dom"/>
</dbReference>
<dbReference type="NCBIfam" id="TIGR01574">
    <property type="entry name" value="miaB-methiolase"/>
    <property type="match status" value="1"/>
</dbReference>
<dbReference type="NCBIfam" id="TIGR00089">
    <property type="entry name" value="MiaB/RimO family radical SAM methylthiotransferase"/>
    <property type="match status" value="1"/>
</dbReference>
<dbReference type="PANTHER" id="PTHR43020">
    <property type="entry name" value="CDK5 REGULATORY SUBUNIT-ASSOCIATED PROTEIN 1"/>
    <property type="match status" value="1"/>
</dbReference>
<dbReference type="PANTHER" id="PTHR43020:SF2">
    <property type="entry name" value="MITOCHONDRIAL TRNA METHYLTHIOTRANSFERASE CDK5RAP1"/>
    <property type="match status" value="1"/>
</dbReference>
<dbReference type="Pfam" id="PF04055">
    <property type="entry name" value="Radical_SAM"/>
    <property type="match status" value="1"/>
</dbReference>
<dbReference type="Pfam" id="PF01938">
    <property type="entry name" value="TRAM"/>
    <property type="match status" value="1"/>
</dbReference>
<dbReference type="Pfam" id="PF00919">
    <property type="entry name" value="UPF0004"/>
    <property type="match status" value="1"/>
</dbReference>
<dbReference type="SFLD" id="SFLDF00273">
    <property type="entry name" value="(dimethylallyl)adenosine_tRNA"/>
    <property type="match status" value="1"/>
</dbReference>
<dbReference type="SFLD" id="SFLDG01082">
    <property type="entry name" value="B12-binding_domain_containing"/>
    <property type="match status" value="1"/>
</dbReference>
<dbReference type="SFLD" id="SFLDS00029">
    <property type="entry name" value="Radical_SAM"/>
    <property type="match status" value="1"/>
</dbReference>
<dbReference type="SMART" id="SM00729">
    <property type="entry name" value="Elp3"/>
    <property type="match status" value="1"/>
</dbReference>
<dbReference type="SUPFAM" id="SSF102114">
    <property type="entry name" value="Radical SAM enzymes"/>
    <property type="match status" value="1"/>
</dbReference>
<dbReference type="PROSITE" id="PS51449">
    <property type="entry name" value="MTTASE_N"/>
    <property type="match status" value="1"/>
</dbReference>
<dbReference type="PROSITE" id="PS01278">
    <property type="entry name" value="MTTASE_RADICAL"/>
    <property type="match status" value="1"/>
</dbReference>
<dbReference type="PROSITE" id="PS51918">
    <property type="entry name" value="RADICAL_SAM"/>
    <property type="match status" value="1"/>
</dbReference>
<dbReference type="PROSITE" id="PS50926">
    <property type="entry name" value="TRAM"/>
    <property type="match status" value="1"/>
</dbReference>
<accession>B1JY57</accession>
<feature type="chain" id="PRO_0000374176" description="tRNA-2-methylthio-N(6)-dimethylallyladenosine synthase">
    <location>
        <begin position="1"/>
        <end position="457"/>
    </location>
</feature>
<feature type="domain" description="MTTase N-terminal" evidence="1">
    <location>
        <begin position="3"/>
        <end position="120"/>
    </location>
</feature>
<feature type="domain" description="Radical SAM core" evidence="2">
    <location>
        <begin position="143"/>
        <end position="377"/>
    </location>
</feature>
<feature type="domain" description="TRAM" evidence="1">
    <location>
        <begin position="380"/>
        <end position="447"/>
    </location>
</feature>
<feature type="binding site" evidence="1">
    <location>
        <position position="12"/>
    </location>
    <ligand>
        <name>[4Fe-4S] cluster</name>
        <dbReference type="ChEBI" id="CHEBI:49883"/>
        <label>1</label>
    </ligand>
</feature>
<feature type="binding site" evidence="1">
    <location>
        <position position="49"/>
    </location>
    <ligand>
        <name>[4Fe-4S] cluster</name>
        <dbReference type="ChEBI" id="CHEBI:49883"/>
        <label>1</label>
    </ligand>
</feature>
<feature type="binding site" evidence="1">
    <location>
        <position position="83"/>
    </location>
    <ligand>
        <name>[4Fe-4S] cluster</name>
        <dbReference type="ChEBI" id="CHEBI:49883"/>
        <label>1</label>
    </ligand>
</feature>
<feature type="binding site" evidence="1">
    <location>
        <position position="157"/>
    </location>
    <ligand>
        <name>[4Fe-4S] cluster</name>
        <dbReference type="ChEBI" id="CHEBI:49883"/>
        <label>2</label>
        <note>4Fe-4S-S-AdoMet</note>
    </ligand>
</feature>
<feature type="binding site" evidence="1">
    <location>
        <position position="161"/>
    </location>
    <ligand>
        <name>[4Fe-4S] cluster</name>
        <dbReference type="ChEBI" id="CHEBI:49883"/>
        <label>2</label>
        <note>4Fe-4S-S-AdoMet</note>
    </ligand>
</feature>
<feature type="binding site" evidence="1">
    <location>
        <position position="164"/>
    </location>
    <ligand>
        <name>[4Fe-4S] cluster</name>
        <dbReference type="ChEBI" id="CHEBI:49883"/>
        <label>2</label>
        <note>4Fe-4S-S-AdoMet</note>
    </ligand>
</feature>
<sequence>MTKKVYVKTFGCQMNEYDSDKMVDVLNAAEGLEKTDTPEDADIILFNTCSVREKAQEKVFSDLGRVRELKEAKPGLLIGVGGCVASQEGASIVSRAPYVDLVFGPQTLHRLPQMIDARRASGRAQVDITFPEIEKFDHLPPARVEGPSAFVSIMEGCSKYCSYCVVPYTRGDEVSRPLDDVLTEVAGLADQGVREVTLLGQNVNAYRGALTAGSTDIADFATLIEYVADIPGIERIRYTTSHPKEFTQRLIDTYAKVPKLVSHLHLPVQHGSDRILMAMKRGYTVLEYKSVIRKLRAIRPDLSLSTDMIVGFPGETEDDFDKMMALVHEMGYDTSFSFIYSPRPGTPAANLADDTPREVKLKRLQHLQATIEENVARISQSMVGKVERILVEGPSRKDPNELAGRTENNRVVNFPAPLASHPRLIGQMIDVKINHAYPHSLRGELVLVSDDASTATH</sequence>
<reference key="1">
    <citation type="submission" date="2008-02" db="EMBL/GenBank/DDBJ databases">
        <title>Complete sequence of chromosome 1 of Burkholderia cenocepacia MC0-3.</title>
        <authorList>
            <person name="Copeland A."/>
            <person name="Lucas S."/>
            <person name="Lapidus A."/>
            <person name="Barry K."/>
            <person name="Bruce D."/>
            <person name="Goodwin L."/>
            <person name="Glavina del Rio T."/>
            <person name="Dalin E."/>
            <person name="Tice H."/>
            <person name="Pitluck S."/>
            <person name="Chain P."/>
            <person name="Malfatti S."/>
            <person name="Shin M."/>
            <person name="Vergez L."/>
            <person name="Schmutz J."/>
            <person name="Larimer F."/>
            <person name="Land M."/>
            <person name="Hauser L."/>
            <person name="Kyrpides N."/>
            <person name="Mikhailova N."/>
            <person name="Tiedje J."/>
            <person name="Richardson P."/>
        </authorList>
    </citation>
    <scope>NUCLEOTIDE SEQUENCE [LARGE SCALE GENOMIC DNA]</scope>
    <source>
        <strain>MC0-3</strain>
    </source>
</reference>
<keyword id="KW-0004">4Fe-4S</keyword>
<keyword id="KW-0963">Cytoplasm</keyword>
<keyword id="KW-0408">Iron</keyword>
<keyword id="KW-0411">Iron-sulfur</keyword>
<keyword id="KW-0479">Metal-binding</keyword>
<keyword id="KW-0949">S-adenosyl-L-methionine</keyword>
<keyword id="KW-0808">Transferase</keyword>
<keyword id="KW-0819">tRNA processing</keyword>
<name>MIAB_BURO0</name>
<evidence type="ECO:0000255" key="1">
    <source>
        <dbReference type="HAMAP-Rule" id="MF_01864"/>
    </source>
</evidence>
<evidence type="ECO:0000255" key="2">
    <source>
        <dbReference type="PROSITE-ProRule" id="PRU01266"/>
    </source>
</evidence>